<proteinExistence type="inferred from homology"/>
<organism>
    <name type="scientific">Clostridium perfringens (strain 13 / Type A)</name>
    <dbReference type="NCBI Taxonomy" id="195102"/>
    <lineage>
        <taxon>Bacteria</taxon>
        <taxon>Bacillati</taxon>
        <taxon>Bacillota</taxon>
        <taxon>Clostridia</taxon>
        <taxon>Eubacteriales</taxon>
        <taxon>Clostridiaceae</taxon>
        <taxon>Clostridium</taxon>
    </lineage>
</organism>
<gene>
    <name evidence="2" type="primary">pyrR</name>
    <name type="ordered locus">CPE1849</name>
</gene>
<dbReference type="EC" id="2.4.2.9" evidence="2"/>
<dbReference type="EMBL" id="BA000016">
    <property type="protein sequence ID" value="BAB81555.1"/>
    <property type="molecule type" value="Genomic_DNA"/>
</dbReference>
<dbReference type="RefSeq" id="WP_003451681.1">
    <property type="nucleotide sequence ID" value="NC_003366.1"/>
</dbReference>
<dbReference type="SMR" id="Q8XJB2"/>
<dbReference type="STRING" id="195102.gene:10491113"/>
<dbReference type="GeneID" id="93001616"/>
<dbReference type="KEGG" id="cpe:CPE1849"/>
<dbReference type="HOGENOM" id="CLU_094234_2_1_9"/>
<dbReference type="Proteomes" id="UP000000818">
    <property type="component" value="Chromosome"/>
</dbReference>
<dbReference type="GO" id="GO:0003723">
    <property type="term" value="F:RNA binding"/>
    <property type="evidence" value="ECO:0007669"/>
    <property type="project" value="UniProtKB-UniRule"/>
</dbReference>
<dbReference type="GO" id="GO:0004845">
    <property type="term" value="F:uracil phosphoribosyltransferase activity"/>
    <property type="evidence" value="ECO:0007669"/>
    <property type="project" value="UniProtKB-UniRule"/>
</dbReference>
<dbReference type="GO" id="GO:0006353">
    <property type="term" value="P:DNA-templated transcription termination"/>
    <property type="evidence" value="ECO:0007669"/>
    <property type="project" value="UniProtKB-UniRule"/>
</dbReference>
<dbReference type="CDD" id="cd06223">
    <property type="entry name" value="PRTases_typeI"/>
    <property type="match status" value="1"/>
</dbReference>
<dbReference type="FunFam" id="3.40.50.2020:FF:000020">
    <property type="entry name" value="Bifunctional protein PyrR"/>
    <property type="match status" value="1"/>
</dbReference>
<dbReference type="Gene3D" id="3.40.50.2020">
    <property type="match status" value="1"/>
</dbReference>
<dbReference type="HAMAP" id="MF_01219">
    <property type="entry name" value="PyrR"/>
    <property type="match status" value="1"/>
</dbReference>
<dbReference type="InterPro" id="IPR000836">
    <property type="entry name" value="PRibTrfase_dom"/>
</dbReference>
<dbReference type="InterPro" id="IPR029057">
    <property type="entry name" value="PRTase-like"/>
</dbReference>
<dbReference type="InterPro" id="IPR023050">
    <property type="entry name" value="PyrR"/>
</dbReference>
<dbReference type="InterPro" id="IPR050137">
    <property type="entry name" value="PyrR_bifunctional"/>
</dbReference>
<dbReference type="NCBIfam" id="NF003548">
    <property type="entry name" value="PRK05205.1-4"/>
    <property type="match status" value="1"/>
</dbReference>
<dbReference type="NCBIfam" id="NF003549">
    <property type="entry name" value="PRK05205.1-5"/>
    <property type="match status" value="1"/>
</dbReference>
<dbReference type="PANTHER" id="PTHR11608">
    <property type="entry name" value="BIFUNCTIONAL PROTEIN PYRR"/>
    <property type="match status" value="1"/>
</dbReference>
<dbReference type="PANTHER" id="PTHR11608:SF0">
    <property type="entry name" value="BIFUNCTIONAL PROTEIN PYRR"/>
    <property type="match status" value="1"/>
</dbReference>
<dbReference type="Pfam" id="PF00156">
    <property type="entry name" value="Pribosyltran"/>
    <property type="match status" value="1"/>
</dbReference>
<dbReference type="SUPFAM" id="SSF53271">
    <property type="entry name" value="PRTase-like"/>
    <property type="match status" value="1"/>
</dbReference>
<protein>
    <recommendedName>
        <fullName evidence="2">Bifunctional protein PyrR</fullName>
    </recommendedName>
    <domain>
        <recommendedName>
            <fullName evidence="2">Pyrimidine operon regulatory protein</fullName>
        </recommendedName>
    </domain>
    <domain>
        <recommendedName>
            <fullName evidence="2">Uracil phosphoribosyltransferase</fullName>
            <shortName evidence="2">UPRTase</shortName>
            <ecNumber evidence="2">2.4.2.9</ecNumber>
        </recommendedName>
    </domain>
</protein>
<accession>Q8XJB2</accession>
<sequence>MHLKASLLDENAIRRALTRLSHEIIEKNKGVEDIVLVGIKRRGYPLAERLSEFIEKFEGVKIPVASVDITLYRDDLTNVSDTPNLNDPKIDVDIRGKKVIIVDDVLYTCRTARAAIDAIMDQGRPEFIQLAVLVDRGHKELPIRADYVGKNIPTSKDEIIKVQIKEIDGTDSVEIYEN</sequence>
<comment type="function">
    <text evidence="2">Regulates transcriptional attenuation of the pyrimidine nucleotide (pyr) operon by binding in a uridine-dependent manner to specific sites on pyr mRNA. This disrupts an antiterminator hairpin in the RNA and favors formation of a downstream transcription terminator, leading to a reduced expression of downstream genes.</text>
</comment>
<comment type="function">
    <text evidence="2">Also displays a weak uracil phosphoribosyltransferase activity which is not physiologically significant.</text>
</comment>
<comment type="catalytic activity">
    <reaction evidence="2">
        <text>UMP + diphosphate = 5-phospho-alpha-D-ribose 1-diphosphate + uracil</text>
        <dbReference type="Rhea" id="RHEA:13017"/>
        <dbReference type="ChEBI" id="CHEBI:17568"/>
        <dbReference type="ChEBI" id="CHEBI:33019"/>
        <dbReference type="ChEBI" id="CHEBI:57865"/>
        <dbReference type="ChEBI" id="CHEBI:58017"/>
        <dbReference type="EC" id="2.4.2.9"/>
    </reaction>
</comment>
<comment type="subunit">
    <text evidence="2">Homodimer and homohexamer; in equilibrium.</text>
</comment>
<comment type="similarity">
    <text evidence="2">Belongs to the purine/pyrimidine phosphoribosyltransferase family. PyrR subfamily.</text>
</comment>
<name>PYRR_CLOPE</name>
<feature type="chain" id="PRO_0000183032" description="Bifunctional protein PyrR">
    <location>
        <begin position="1"/>
        <end position="178"/>
    </location>
</feature>
<feature type="short sequence motif" description="PRPP-binding" evidence="2">
    <location>
        <begin position="99"/>
        <end position="111"/>
    </location>
</feature>
<feature type="binding site" evidence="1">
    <location>
        <begin position="41"/>
        <end position="42"/>
    </location>
    <ligand>
        <name>substrate</name>
    </ligand>
</feature>
<feature type="binding site" evidence="1">
    <location>
        <begin position="103"/>
        <end position="111"/>
    </location>
    <ligand>
        <name>substrate</name>
    </ligand>
</feature>
<feature type="binding site" evidence="1">
    <location>
        <position position="136"/>
    </location>
    <ligand>
        <name>substrate</name>
    </ligand>
</feature>
<keyword id="KW-0328">Glycosyltransferase</keyword>
<keyword id="KW-1185">Reference proteome</keyword>
<keyword id="KW-0694">RNA-binding</keyword>
<keyword id="KW-0804">Transcription</keyword>
<keyword id="KW-0805">Transcription regulation</keyword>
<keyword id="KW-0806">Transcription termination</keyword>
<keyword id="KW-0808">Transferase</keyword>
<reference key="1">
    <citation type="journal article" date="2002" name="Proc. Natl. Acad. Sci. U.S.A.">
        <title>Complete genome sequence of Clostridium perfringens, an anaerobic flesh-eater.</title>
        <authorList>
            <person name="Shimizu T."/>
            <person name="Ohtani K."/>
            <person name="Hirakawa H."/>
            <person name="Ohshima K."/>
            <person name="Yamashita A."/>
            <person name="Shiba T."/>
            <person name="Ogasawara N."/>
            <person name="Hattori M."/>
            <person name="Kuhara S."/>
            <person name="Hayashi H."/>
        </authorList>
    </citation>
    <scope>NUCLEOTIDE SEQUENCE [LARGE SCALE GENOMIC DNA]</scope>
    <source>
        <strain>13 / Type A</strain>
    </source>
</reference>
<evidence type="ECO:0000250" key="1"/>
<evidence type="ECO:0000255" key="2">
    <source>
        <dbReference type="HAMAP-Rule" id="MF_01219"/>
    </source>
</evidence>